<protein>
    <recommendedName>
        <fullName>Glutamate-1-semialdehyde 2,1-aminomutase</fullName>
        <shortName>GSA</shortName>
        <ecNumber>5.4.3.8</ecNumber>
    </recommendedName>
    <alternativeName>
        <fullName>Glutamate-1-semialdehyde aminotransferase</fullName>
        <shortName>GSA-AT</shortName>
    </alternativeName>
</protein>
<organism>
    <name type="scientific">Helicobacter pylori (strain J99 / ATCC 700824)</name>
    <name type="common">Campylobacter pylori J99</name>
    <dbReference type="NCBI Taxonomy" id="85963"/>
    <lineage>
        <taxon>Bacteria</taxon>
        <taxon>Pseudomonadati</taxon>
        <taxon>Campylobacterota</taxon>
        <taxon>Epsilonproteobacteria</taxon>
        <taxon>Campylobacterales</taxon>
        <taxon>Helicobacteraceae</taxon>
        <taxon>Helicobacter</taxon>
    </lineage>
</organism>
<feature type="chain" id="PRO_0000120415" description="Glutamate-1-semialdehyde 2,1-aminomutase">
    <location>
        <begin position="1"/>
        <end position="430"/>
    </location>
</feature>
<feature type="modified residue" description="N6-(pyridoxal phosphate)lysine" evidence="1">
    <location>
        <position position="265"/>
    </location>
</feature>
<sequence length="430" mass="46729">MELLHSINDFNEAKQVIAGGVNSPVRAFKSVKGTPPFILKGKGAYLYDVDNNHYIDFVQSWGPLIFGHADEEIEENIINVLKKGTSFGAPTELETTLAKEIISCYEGLDKVRLVNSGTEATMSAIRLARAYSQKDDLIKFEGCYHGHSDSLLVKAGSGCATFGSPSSLGVPNDFSKHTLVARYNDLNSTEECFKKGDVGCVIIEPIAGNMGLVPAQKEFLLGLKALCEKYQAVLILDEVMSGFRASLSGSQEFYGVVPDLVTFGKVIGAGLPLACFGGRAEIMDLLSPIGGVYQAGTLSGNPLAVCAGLSALYKIKRDKTLYTRLNALAVRLTQGLQKSAQNYNIALETLNMGSMFGFFFNENAVRDFDDALKSDTEMFAKFHQKMLFKGVYLACSSFETGFICEPMTEEMIDLAISKADESFDEIINGV</sequence>
<name>GSA_HELPJ</name>
<accession>Q9ZMD0</accession>
<proteinExistence type="inferred from homology"/>
<keyword id="KW-0963">Cytoplasm</keyword>
<keyword id="KW-0413">Isomerase</keyword>
<keyword id="KW-0627">Porphyrin biosynthesis</keyword>
<keyword id="KW-0663">Pyridoxal phosphate</keyword>
<reference key="1">
    <citation type="journal article" date="1999" name="Nature">
        <title>Genomic sequence comparison of two unrelated isolates of the human gastric pathogen Helicobacter pylori.</title>
        <authorList>
            <person name="Alm R.A."/>
            <person name="Ling L.-S.L."/>
            <person name="Moir D.T."/>
            <person name="King B.L."/>
            <person name="Brown E.D."/>
            <person name="Doig P.C."/>
            <person name="Smith D.R."/>
            <person name="Noonan B."/>
            <person name="Guild B.C."/>
            <person name="deJonge B.L."/>
            <person name="Carmel G."/>
            <person name="Tummino P.J."/>
            <person name="Caruso A."/>
            <person name="Uria-Nickelsen M."/>
            <person name="Mills D.M."/>
            <person name="Ives C."/>
            <person name="Gibson R."/>
            <person name="Merberg D."/>
            <person name="Mills S.D."/>
            <person name="Jiang Q."/>
            <person name="Taylor D.E."/>
            <person name="Vovis G.F."/>
            <person name="Trust T.J."/>
        </authorList>
    </citation>
    <scope>NUCLEOTIDE SEQUENCE [LARGE SCALE GENOMIC DNA]</scope>
    <source>
        <strain>J99 / ATCC 700824</strain>
    </source>
</reference>
<gene>
    <name type="primary">hemL</name>
    <name type="ordered locus">jhp_0291</name>
</gene>
<evidence type="ECO:0000250" key="1"/>
<evidence type="ECO:0000305" key="2"/>
<dbReference type="EC" id="5.4.3.8"/>
<dbReference type="EMBL" id="AE001439">
    <property type="protein sequence ID" value="AAD05878.1"/>
    <property type="molecule type" value="Genomic_DNA"/>
</dbReference>
<dbReference type="PIR" id="D71949">
    <property type="entry name" value="D71949"/>
</dbReference>
<dbReference type="RefSeq" id="WP_000421486.1">
    <property type="nucleotide sequence ID" value="NC_000921.1"/>
</dbReference>
<dbReference type="SMR" id="Q9ZMD0"/>
<dbReference type="KEGG" id="hpj:jhp_0291"/>
<dbReference type="PATRIC" id="fig|85963.30.peg.722"/>
<dbReference type="eggNOG" id="COG0001">
    <property type="taxonomic scope" value="Bacteria"/>
</dbReference>
<dbReference type="UniPathway" id="UPA00251">
    <property type="reaction ID" value="UER00317"/>
</dbReference>
<dbReference type="Proteomes" id="UP000000804">
    <property type="component" value="Chromosome"/>
</dbReference>
<dbReference type="GO" id="GO:0005737">
    <property type="term" value="C:cytoplasm"/>
    <property type="evidence" value="ECO:0007669"/>
    <property type="project" value="UniProtKB-SubCell"/>
</dbReference>
<dbReference type="GO" id="GO:0042286">
    <property type="term" value="F:glutamate-1-semialdehyde 2,1-aminomutase activity"/>
    <property type="evidence" value="ECO:0007669"/>
    <property type="project" value="UniProtKB-UniRule"/>
</dbReference>
<dbReference type="GO" id="GO:0030170">
    <property type="term" value="F:pyridoxal phosphate binding"/>
    <property type="evidence" value="ECO:0007669"/>
    <property type="project" value="InterPro"/>
</dbReference>
<dbReference type="GO" id="GO:0008483">
    <property type="term" value="F:transaminase activity"/>
    <property type="evidence" value="ECO:0007669"/>
    <property type="project" value="InterPro"/>
</dbReference>
<dbReference type="GO" id="GO:0006782">
    <property type="term" value="P:protoporphyrinogen IX biosynthetic process"/>
    <property type="evidence" value="ECO:0007669"/>
    <property type="project" value="UniProtKB-UniRule"/>
</dbReference>
<dbReference type="CDD" id="cd00610">
    <property type="entry name" value="OAT_like"/>
    <property type="match status" value="1"/>
</dbReference>
<dbReference type="FunFam" id="3.40.640.10:FF:000021">
    <property type="entry name" value="Glutamate-1-semialdehyde 2,1-aminomutase"/>
    <property type="match status" value="1"/>
</dbReference>
<dbReference type="Gene3D" id="3.90.1150.10">
    <property type="entry name" value="Aspartate Aminotransferase, domain 1"/>
    <property type="match status" value="1"/>
</dbReference>
<dbReference type="Gene3D" id="3.40.640.10">
    <property type="entry name" value="Type I PLP-dependent aspartate aminotransferase-like (Major domain)"/>
    <property type="match status" value="1"/>
</dbReference>
<dbReference type="HAMAP" id="MF_00375">
    <property type="entry name" value="HemL_aminotrans_3"/>
    <property type="match status" value="1"/>
</dbReference>
<dbReference type="InterPro" id="IPR004639">
    <property type="entry name" value="4pyrrol_synth_GluAld_NH2Trfase"/>
</dbReference>
<dbReference type="InterPro" id="IPR005814">
    <property type="entry name" value="Aminotrans_3"/>
</dbReference>
<dbReference type="InterPro" id="IPR049704">
    <property type="entry name" value="Aminotrans_3_PPA_site"/>
</dbReference>
<dbReference type="InterPro" id="IPR015424">
    <property type="entry name" value="PyrdxlP-dep_Trfase"/>
</dbReference>
<dbReference type="InterPro" id="IPR015421">
    <property type="entry name" value="PyrdxlP-dep_Trfase_major"/>
</dbReference>
<dbReference type="InterPro" id="IPR015422">
    <property type="entry name" value="PyrdxlP-dep_Trfase_small"/>
</dbReference>
<dbReference type="NCBIfam" id="TIGR00713">
    <property type="entry name" value="hemL"/>
    <property type="match status" value="1"/>
</dbReference>
<dbReference type="NCBIfam" id="NF000818">
    <property type="entry name" value="PRK00062.1"/>
    <property type="match status" value="1"/>
</dbReference>
<dbReference type="PANTHER" id="PTHR43713">
    <property type="entry name" value="GLUTAMATE-1-SEMIALDEHYDE 2,1-AMINOMUTASE"/>
    <property type="match status" value="1"/>
</dbReference>
<dbReference type="PANTHER" id="PTHR43713:SF3">
    <property type="entry name" value="GLUTAMATE-1-SEMIALDEHYDE 2,1-AMINOMUTASE 1, CHLOROPLASTIC-RELATED"/>
    <property type="match status" value="1"/>
</dbReference>
<dbReference type="Pfam" id="PF00202">
    <property type="entry name" value="Aminotran_3"/>
    <property type="match status" value="1"/>
</dbReference>
<dbReference type="SUPFAM" id="SSF53383">
    <property type="entry name" value="PLP-dependent transferases"/>
    <property type="match status" value="1"/>
</dbReference>
<dbReference type="PROSITE" id="PS00600">
    <property type="entry name" value="AA_TRANSFER_CLASS_3"/>
    <property type="match status" value="1"/>
</dbReference>
<comment type="catalytic activity">
    <reaction>
        <text>(S)-4-amino-5-oxopentanoate = 5-aminolevulinate</text>
        <dbReference type="Rhea" id="RHEA:14265"/>
        <dbReference type="ChEBI" id="CHEBI:57501"/>
        <dbReference type="ChEBI" id="CHEBI:356416"/>
        <dbReference type="EC" id="5.4.3.8"/>
    </reaction>
</comment>
<comment type="cofactor">
    <cofactor evidence="1">
        <name>pyridoxal 5'-phosphate</name>
        <dbReference type="ChEBI" id="CHEBI:597326"/>
    </cofactor>
</comment>
<comment type="pathway">
    <text>Porphyrin-containing compound metabolism; protoporphyrin-IX biosynthesis; 5-aminolevulinate from L-glutamyl-tRNA(Glu): step 2/2.</text>
</comment>
<comment type="subunit">
    <text evidence="1">Homodimer.</text>
</comment>
<comment type="subcellular location">
    <subcellularLocation>
        <location evidence="2">Cytoplasm</location>
    </subcellularLocation>
</comment>
<comment type="similarity">
    <text evidence="2">Belongs to the class-III pyridoxal-phosphate-dependent aminotransferase family. HemL subfamily.</text>
</comment>